<keyword id="KW-0488">Methylation</keyword>
<keyword id="KW-0687">Ribonucleoprotein</keyword>
<keyword id="KW-0689">Ribosomal protein</keyword>
<keyword id="KW-0694">RNA-binding</keyword>
<keyword id="KW-0699">rRNA-binding</keyword>
<proteinExistence type="inferred from homology"/>
<organism>
    <name type="scientific">Cyanothece sp. (strain PCC 7425 / ATCC 29141)</name>
    <dbReference type="NCBI Taxonomy" id="395961"/>
    <lineage>
        <taxon>Bacteria</taxon>
        <taxon>Bacillati</taxon>
        <taxon>Cyanobacteriota</taxon>
        <taxon>Cyanophyceae</taxon>
        <taxon>Gomontiellales</taxon>
        <taxon>Cyanothecaceae</taxon>
        <taxon>Cyanothece</taxon>
    </lineage>
</organism>
<accession>B8HVL5</accession>
<reference key="1">
    <citation type="journal article" date="2011" name="MBio">
        <title>Novel metabolic attributes of the genus Cyanothece, comprising a group of unicellular nitrogen-fixing Cyanobacteria.</title>
        <authorList>
            <person name="Bandyopadhyay A."/>
            <person name="Elvitigala T."/>
            <person name="Welsh E."/>
            <person name="Stockel J."/>
            <person name="Liberton M."/>
            <person name="Min H."/>
            <person name="Sherman L.A."/>
            <person name="Pakrasi H.B."/>
        </authorList>
    </citation>
    <scope>NUCLEOTIDE SEQUENCE [LARGE SCALE GENOMIC DNA]</scope>
    <source>
        <strain>PCC 7425 / ATCC 29141</strain>
    </source>
</reference>
<dbReference type="EMBL" id="CP001344">
    <property type="protein sequence ID" value="ACL46327.1"/>
    <property type="molecule type" value="Genomic_DNA"/>
</dbReference>
<dbReference type="SMR" id="B8HVL5"/>
<dbReference type="STRING" id="395961.Cyan7425_4013"/>
<dbReference type="KEGG" id="cyn:Cyan7425_4013"/>
<dbReference type="eggNOG" id="COG0080">
    <property type="taxonomic scope" value="Bacteria"/>
</dbReference>
<dbReference type="HOGENOM" id="CLU_074237_2_2_3"/>
<dbReference type="OrthoDB" id="9802408at2"/>
<dbReference type="GO" id="GO:0022625">
    <property type="term" value="C:cytosolic large ribosomal subunit"/>
    <property type="evidence" value="ECO:0007669"/>
    <property type="project" value="TreeGrafter"/>
</dbReference>
<dbReference type="GO" id="GO:0070180">
    <property type="term" value="F:large ribosomal subunit rRNA binding"/>
    <property type="evidence" value="ECO:0007669"/>
    <property type="project" value="UniProtKB-UniRule"/>
</dbReference>
<dbReference type="GO" id="GO:0003735">
    <property type="term" value="F:structural constituent of ribosome"/>
    <property type="evidence" value="ECO:0007669"/>
    <property type="project" value="InterPro"/>
</dbReference>
<dbReference type="GO" id="GO:0006412">
    <property type="term" value="P:translation"/>
    <property type="evidence" value="ECO:0007669"/>
    <property type="project" value="UniProtKB-UniRule"/>
</dbReference>
<dbReference type="CDD" id="cd00349">
    <property type="entry name" value="Ribosomal_L11"/>
    <property type="match status" value="1"/>
</dbReference>
<dbReference type="FunFam" id="1.10.10.250:FF:000001">
    <property type="entry name" value="50S ribosomal protein L11"/>
    <property type="match status" value="1"/>
</dbReference>
<dbReference type="FunFam" id="3.30.1550.10:FF:000001">
    <property type="entry name" value="50S ribosomal protein L11"/>
    <property type="match status" value="1"/>
</dbReference>
<dbReference type="Gene3D" id="1.10.10.250">
    <property type="entry name" value="Ribosomal protein L11, C-terminal domain"/>
    <property type="match status" value="1"/>
</dbReference>
<dbReference type="Gene3D" id="3.30.1550.10">
    <property type="entry name" value="Ribosomal protein L11/L12, N-terminal domain"/>
    <property type="match status" value="1"/>
</dbReference>
<dbReference type="HAMAP" id="MF_00736">
    <property type="entry name" value="Ribosomal_uL11"/>
    <property type="match status" value="1"/>
</dbReference>
<dbReference type="InterPro" id="IPR000911">
    <property type="entry name" value="Ribosomal_uL11"/>
</dbReference>
<dbReference type="InterPro" id="IPR006519">
    <property type="entry name" value="Ribosomal_uL11_bac-typ"/>
</dbReference>
<dbReference type="InterPro" id="IPR020783">
    <property type="entry name" value="Ribosomal_uL11_C"/>
</dbReference>
<dbReference type="InterPro" id="IPR036769">
    <property type="entry name" value="Ribosomal_uL11_C_sf"/>
</dbReference>
<dbReference type="InterPro" id="IPR020785">
    <property type="entry name" value="Ribosomal_uL11_CS"/>
</dbReference>
<dbReference type="InterPro" id="IPR020784">
    <property type="entry name" value="Ribosomal_uL11_N"/>
</dbReference>
<dbReference type="InterPro" id="IPR036796">
    <property type="entry name" value="Ribosomal_uL11_N_sf"/>
</dbReference>
<dbReference type="NCBIfam" id="TIGR01632">
    <property type="entry name" value="L11_bact"/>
    <property type="match status" value="1"/>
</dbReference>
<dbReference type="PANTHER" id="PTHR11661">
    <property type="entry name" value="60S RIBOSOMAL PROTEIN L12"/>
    <property type="match status" value="1"/>
</dbReference>
<dbReference type="PANTHER" id="PTHR11661:SF1">
    <property type="entry name" value="LARGE RIBOSOMAL SUBUNIT PROTEIN UL11M"/>
    <property type="match status" value="1"/>
</dbReference>
<dbReference type="Pfam" id="PF00298">
    <property type="entry name" value="Ribosomal_L11"/>
    <property type="match status" value="1"/>
</dbReference>
<dbReference type="Pfam" id="PF03946">
    <property type="entry name" value="Ribosomal_L11_N"/>
    <property type="match status" value="1"/>
</dbReference>
<dbReference type="SMART" id="SM00649">
    <property type="entry name" value="RL11"/>
    <property type="match status" value="1"/>
</dbReference>
<dbReference type="SUPFAM" id="SSF54747">
    <property type="entry name" value="Ribosomal L11/L12e N-terminal domain"/>
    <property type="match status" value="1"/>
</dbReference>
<dbReference type="SUPFAM" id="SSF46906">
    <property type="entry name" value="Ribosomal protein L11, C-terminal domain"/>
    <property type="match status" value="1"/>
</dbReference>
<dbReference type="PROSITE" id="PS00359">
    <property type="entry name" value="RIBOSOMAL_L11"/>
    <property type="match status" value="1"/>
</dbReference>
<evidence type="ECO:0000255" key="1">
    <source>
        <dbReference type="HAMAP-Rule" id="MF_00736"/>
    </source>
</evidence>
<evidence type="ECO:0000305" key="2"/>
<comment type="function">
    <text evidence="1">Forms part of the ribosomal stalk which helps the ribosome interact with GTP-bound translation factors.</text>
</comment>
<comment type="subunit">
    <text evidence="1">Part of the ribosomal stalk of the 50S ribosomal subunit. Interacts with L10 and the large rRNA to form the base of the stalk. L10 forms an elongated spine to which L12 dimers bind in a sequential fashion forming a multimeric L10(L12)X complex.</text>
</comment>
<comment type="PTM">
    <text evidence="1">One or more lysine residues are methylated.</text>
</comment>
<comment type="similarity">
    <text evidence="1">Belongs to the universal ribosomal protein uL11 family.</text>
</comment>
<protein>
    <recommendedName>
        <fullName evidence="1">Large ribosomal subunit protein uL11</fullName>
    </recommendedName>
    <alternativeName>
        <fullName evidence="2">50S ribosomal protein L11</fullName>
    </alternativeName>
</protein>
<gene>
    <name evidence="1" type="primary">rplK</name>
    <name evidence="1" type="synonym">rpl11</name>
    <name type="ordered locus">Cyan7425_4013</name>
</gene>
<name>RL11_CYAP4</name>
<feature type="chain" id="PRO_1000195614" description="Large ribosomal subunit protein uL11">
    <location>
        <begin position="1"/>
        <end position="141"/>
    </location>
</feature>
<sequence length="141" mass="14923">MAKKVVAIIKLAITAGKANPAPPIGPALGQHGVNIMMFCKEYNARTADQAGLVIPVEISVYEDRSFTFILKTPPASVLIQKAAGIERGSGEPNKKKVGKITTAQLREIAQTKLPDLNANDVDAAMRIVAGTARNMGVTIVD</sequence>